<reference key="1">
    <citation type="submission" date="2007-06" db="EMBL/GenBank/DDBJ databases">
        <authorList>
            <person name="Brinkac L.M."/>
            <person name="Daugherty S."/>
            <person name="Dodson R.J."/>
            <person name="Madupu R."/>
            <person name="Brown J.L."/>
            <person name="Bruce D."/>
            <person name="Detter C."/>
            <person name="Munk C."/>
            <person name="Smith L.A."/>
            <person name="Smith T.J."/>
            <person name="White O."/>
            <person name="Brettin T.S."/>
        </authorList>
    </citation>
    <scope>NUCLEOTIDE SEQUENCE [LARGE SCALE GENOMIC DNA]</scope>
    <source>
        <strain>Langeland / NCTC 10281 / Type F</strain>
    </source>
</reference>
<feature type="chain" id="PRO_1000080734" description="Transcriptional repressor NrdR">
    <location>
        <begin position="1"/>
        <end position="151"/>
    </location>
</feature>
<feature type="domain" description="ATP-cone" evidence="1">
    <location>
        <begin position="49"/>
        <end position="139"/>
    </location>
</feature>
<feature type="zinc finger region" evidence="1">
    <location>
        <begin position="3"/>
        <end position="34"/>
    </location>
</feature>
<proteinExistence type="inferred from homology"/>
<comment type="function">
    <text evidence="1">Negatively regulates transcription of bacterial ribonucleotide reductase nrd genes and operons by binding to NrdR-boxes.</text>
</comment>
<comment type="cofactor">
    <cofactor evidence="1">
        <name>Zn(2+)</name>
        <dbReference type="ChEBI" id="CHEBI:29105"/>
    </cofactor>
    <text evidence="1">Binds 1 zinc ion.</text>
</comment>
<comment type="similarity">
    <text evidence="1">Belongs to the NrdR family.</text>
</comment>
<name>NRDR_CLOBL</name>
<accession>A7GGB7</accession>
<gene>
    <name evidence="1" type="primary">nrdR</name>
    <name type="ordered locus">CLI_2592</name>
</gene>
<sequence length="151" mass="17933">MKCPYCAYGESKVVDSRSTEDGSSIRRRRECLKCNRRYTTYEKIETTPILVIKKNMSREYFDRNKIVNGLMKACQKRPVSRKQIEQIANEVERHISNEMLTEVNTDKIGQIIMKNLKKIDEVSYVRFASVYRQFKDINTFMEEIKNLMDKN</sequence>
<organism>
    <name type="scientific">Clostridium botulinum (strain Langeland / NCTC 10281 / Type F)</name>
    <dbReference type="NCBI Taxonomy" id="441772"/>
    <lineage>
        <taxon>Bacteria</taxon>
        <taxon>Bacillati</taxon>
        <taxon>Bacillota</taxon>
        <taxon>Clostridia</taxon>
        <taxon>Eubacteriales</taxon>
        <taxon>Clostridiaceae</taxon>
        <taxon>Clostridium</taxon>
    </lineage>
</organism>
<evidence type="ECO:0000255" key="1">
    <source>
        <dbReference type="HAMAP-Rule" id="MF_00440"/>
    </source>
</evidence>
<protein>
    <recommendedName>
        <fullName evidence="1">Transcriptional repressor NrdR</fullName>
    </recommendedName>
</protein>
<keyword id="KW-0067">ATP-binding</keyword>
<keyword id="KW-0238">DNA-binding</keyword>
<keyword id="KW-0479">Metal-binding</keyword>
<keyword id="KW-0547">Nucleotide-binding</keyword>
<keyword id="KW-0678">Repressor</keyword>
<keyword id="KW-0804">Transcription</keyword>
<keyword id="KW-0805">Transcription regulation</keyword>
<keyword id="KW-0862">Zinc</keyword>
<keyword id="KW-0863">Zinc-finger</keyword>
<dbReference type="EMBL" id="CP000728">
    <property type="protein sequence ID" value="ABS42476.1"/>
    <property type="molecule type" value="Genomic_DNA"/>
</dbReference>
<dbReference type="RefSeq" id="WP_003399430.1">
    <property type="nucleotide sequence ID" value="NC_009699.1"/>
</dbReference>
<dbReference type="SMR" id="A7GGB7"/>
<dbReference type="GeneID" id="5186785"/>
<dbReference type="KEGG" id="cbf:CLI_2592"/>
<dbReference type="HOGENOM" id="CLU_108412_0_0_9"/>
<dbReference type="Proteomes" id="UP000002410">
    <property type="component" value="Chromosome"/>
</dbReference>
<dbReference type="GO" id="GO:0005524">
    <property type="term" value="F:ATP binding"/>
    <property type="evidence" value="ECO:0007669"/>
    <property type="project" value="UniProtKB-KW"/>
</dbReference>
<dbReference type="GO" id="GO:0003677">
    <property type="term" value="F:DNA binding"/>
    <property type="evidence" value="ECO:0007669"/>
    <property type="project" value="UniProtKB-KW"/>
</dbReference>
<dbReference type="GO" id="GO:0008270">
    <property type="term" value="F:zinc ion binding"/>
    <property type="evidence" value="ECO:0007669"/>
    <property type="project" value="UniProtKB-UniRule"/>
</dbReference>
<dbReference type="GO" id="GO:0045892">
    <property type="term" value="P:negative regulation of DNA-templated transcription"/>
    <property type="evidence" value="ECO:0007669"/>
    <property type="project" value="UniProtKB-UniRule"/>
</dbReference>
<dbReference type="HAMAP" id="MF_00440">
    <property type="entry name" value="NrdR"/>
    <property type="match status" value="1"/>
</dbReference>
<dbReference type="InterPro" id="IPR005144">
    <property type="entry name" value="ATP-cone_dom"/>
</dbReference>
<dbReference type="InterPro" id="IPR055173">
    <property type="entry name" value="NrdR-like_N"/>
</dbReference>
<dbReference type="InterPro" id="IPR003796">
    <property type="entry name" value="RNR_NrdR-like"/>
</dbReference>
<dbReference type="NCBIfam" id="TIGR00244">
    <property type="entry name" value="transcriptional regulator NrdR"/>
    <property type="match status" value="1"/>
</dbReference>
<dbReference type="PANTHER" id="PTHR30455">
    <property type="entry name" value="TRANSCRIPTIONAL REPRESSOR NRDR"/>
    <property type="match status" value="1"/>
</dbReference>
<dbReference type="PANTHER" id="PTHR30455:SF2">
    <property type="entry name" value="TRANSCRIPTIONAL REPRESSOR NRDR"/>
    <property type="match status" value="1"/>
</dbReference>
<dbReference type="Pfam" id="PF03477">
    <property type="entry name" value="ATP-cone"/>
    <property type="match status" value="1"/>
</dbReference>
<dbReference type="Pfam" id="PF22811">
    <property type="entry name" value="Zn_ribbon_NrdR"/>
    <property type="match status" value="1"/>
</dbReference>
<dbReference type="PROSITE" id="PS51161">
    <property type="entry name" value="ATP_CONE"/>
    <property type="match status" value="1"/>
</dbReference>